<evidence type="ECO:0000255" key="1">
    <source>
        <dbReference type="HAMAP-Rule" id="MF_00244"/>
    </source>
</evidence>
<sequence>MHSIAIFGGTFDPVHNGHIKTSLAIQANFGFDSYYFLPCKSPAIKPPSFASSEQRVEMLKLALKPYPDFKIDTRELDRDTPSYMVYTLQSFRQEYTDSSLTLIIGYDGLLNLPQWYQWEKIISLANLLVINREEFFQKPVPKSVQTLLNQYRNDDKNILLNHHAGSICLYNAGHYDISSTKIREQLKQHKDVKNNLPDLVYDYIKKQELYQ</sequence>
<gene>
    <name evidence="1" type="primary">nadD</name>
    <name type="ordered locus">lpl1298</name>
</gene>
<accession>Q5WX01</accession>
<keyword id="KW-0067">ATP-binding</keyword>
<keyword id="KW-0520">NAD</keyword>
<keyword id="KW-0547">Nucleotide-binding</keyword>
<keyword id="KW-0548">Nucleotidyltransferase</keyword>
<keyword id="KW-0662">Pyridine nucleotide biosynthesis</keyword>
<keyword id="KW-0808">Transferase</keyword>
<reference key="1">
    <citation type="journal article" date="2004" name="Nat. Genet.">
        <title>Evidence in the Legionella pneumophila genome for exploitation of host cell functions and high genome plasticity.</title>
        <authorList>
            <person name="Cazalet C."/>
            <person name="Rusniok C."/>
            <person name="Brueggemann H."/>
            <person name="Zidane N."/>
            <person name="Magnier A."/>
            <person name="Ma L."/>
            <person name="Tichit M."/>
            <person name="Jarraud S."/>
            <person name="Bouchier C."/>
            <person name="Vandenesch F."/>
            <person name="Kunst F."/>
            <person name="Etienne J."/>
            <person name="Glaser P."/>
            <person name="Buchrieser C."/>
        </authorList>
    </citation>
    <scope>NUCLEOTIDE SEQUENCE [LARGE SCALE GENOMIC DNA]</scope>
    <source>
        <strain>Lens</strain>
    </source>
</reference>
<feature type="chain" id="PRO_0000336701" description="Probable nicotinate-nucleotide adenylyltransferase">
    <location>
        <begin position="1"/>
        <end position="211"/>
    </location>
</feature>
<organism>
    <name type="scientific">Legionella pneumophila (strain Lens)</name>
    <dbReference type="NCBI Taxonomy" id="297245"/>
    <lineage>
        <taxon>Bacteria</taxon>
        <taxon>Pseudomonadati</taxon>
        <taxon>Pseudomonadota</taxon>
        <taxon>Gammaproteobacteria</taxon>
        <taxon>Legionellales</taxon>
        <taxon>Legionellaceae</taxon>
        <taxon>Legionella</taxon>
    </lineage>
</organism>
<proteinExistence type="inferred from homology"/>
<protein>
    <recommendedName>
        <fullName evidence="1">Probable nicotinate-nucleotide adenylyltransferase</fullName>
        <ecNumber evidence="1">2.7.7.18</ecNumber>
    </recommendedName>
    <alternativeName>
        <fullName evidence="1">Deamido-NAD(+) diphosphorylase</fullName>
    </alternativeName>
    <alternativeName>
        <fullName evidence="1">Deamido-NAD(+) pyrophosphorylase</fullName>
    </alternativeName>
    <alternativeName>
        <fullName evidence="1">Nicotinate mononucleotide adenylyltransferase</fullName>
        <shortName evidence="1">NaMN adenylyltransferase</shortName>
    </alternativeName>
</protein>
<name>NADD_LEGPL</name>
<comment type="function">
    <text evidence="1">Catalyzes the reversible adenylation of nicotinate mononucleotide (NaMN) to nicotinic acid adenine dinucleotide (NaAD).</text>
</comment>
<comment type="catalytic activity">
    <reaction evidence="1">
        <text>nicotinate beta-D-ribonucleotide + ATP + H(+) = deamido-NAD(+) + diphosphate</text>
        <dbReference type="Rhea" id="RHEA:22860"/>
        <dbReference type="ChEBI" id="CHEBI:15378"/>
        <dbReference type="ChEBI" id="CHEBI:30616"/>
        <dbReference type="ChEBI" id="CHEBI:33019"/>
        <dbReference type="ChEBI" id="CHEBI:57502"/>
        <dbReference type="ChEBI" id="CHEBI:58437"/>
        <dbReference type="EC" id="2.7.7.18"/>
    </reaction>
</comment>
<comment type="pathway">
    <text evidence="1">Cofactor biosynthesis; NAD(+) biosynthesis; deamido-NAD(+) from nicotinate D-ribonucleotide: step 1/1.</text>
</comment>
<comment type="similarity">
    <text evidence="1">Belongs to the NadD family.</text>
</comment>
<dbReference type="EC" id="2.7.7.18" evidence="1"/>
<dbReference type="EMBL" id="CR628337">
    <property type="protein sequence ID" value="CAH15538.1"/>
    <property type="molecule type" value="Genomic_DNA"/>
</dbReference>
<dbReference type="RefSeq" id="WP_011215375.1">
    <property type="nucleotide sequence ID" value="NC_006369.1"/>
</dbReference>
<dbReference type="SMR" id="Q5WX01"/>
<dbReference type="KEGG" id="lpf:lpl1298"/>
<dbReference type="LegioList" id="lpl1298"/>
<dbReference type="HOGENOM" id="CLU_069765_0_0_6"/>
<dbReference type="UniPathway" id="UPA00253">
    <property type="reaction ID" value="UER00332"/>
</dbReference>
<dbReference type="Proteomes" id="UP000002517">
    <property type="component" value="Chromosome"/>
</dbReference>
<dbReference type="GO" id="GO:0005524">
    <property type="term" value="F:ATP binding"/>
    <property type="evidence" value="ECO:0007669"/>
    <property type="project" value="UniProtKB-KW"/>
</dbReference>
<dbReference type="GO" id="GO:0004515">
    <property type="term" value="F:nicotinate-nucleotide adenylyltransferase activity"/>
    <property type="evidence" value="ECO:0007669"/>
    <property type="project" value="UniProtKB-UniRule"/>
</dbReference>
<dbReference type="GO" id="GO:0009435">
    <property type="term" value="P:NAD biosynthetic process"/>
    <property type="evidence" value="ECO:0007669"/>
    <property type="project" value="UniProtKB-UniRule"/>
</dbReference>
<dbReference type="CDD" id="cd02165">
    <property type="entry name" value="NMNAT"/>
    <property type="match status" value="1"/>
</dbReference>
<dbReference type="Gene3D" id="3.40.50.620">
    <property type="entry name" value="HUPs"/>
    <property type="match status" value="1"/>
</dbReference>
<dbReference type="HAMAP" id="MF_00244">
    <property type="entry name" value="NaMN_adenylyltr"/>
    <property type="match status" value="1"/>
</dbReference>
<dbReference type="InterPro" id="IPR004821">
    <property type="entry name" value="Cyt_trans-like"/>
</dbReference>
<dbReference type="InterPro" id="IPR005248">
    <property type="entry name" value="NadD/NMNAT"/>
</dbReference>
<dbReference type="InterPro" id="IPR014729">
    <property type="entry name" value="Rossmann-like_a/b/a_fold"/>
</dbReference>
<dbReference type="NCBIfam" id="TIGR00125">
    <property type="entry name" value="cyt_tran_rel"/>
    <property type="match status" value="1"/>
</dbReference>
<dbReference type="NCBIfam" id="TIGR00482">
    <property type="entry name" value="nicotinate (nicotinamide) nucleotide adenylyltransferase"/>
    <property type="match status" value="1"/>
</dbReference>
<dbReference type="NCBIfam" id="NF000839">
    <property type="entry name" value="PRK00071.1-1"/>
    <property type="match status" value="1"/>
</dbReference>
<dbReference type="PANTHER" id="PTHR39321">
    <property type="entry name" value="NICOTINATE-NUCLEOTIDE ADENYLYLTRANSFERASE-RELATED"/>
    <property type="match status" value="1"/>
</dbReference>
<dbReference type="PANTHER" id="PTHR39321:SF3">
    <property type="entry name" value="PHOSPHOPANTETHEINE ADENYLYLTRANSFERASE"/>
    <property type="match status" value="1"/>
</dbReference>
<dbReference type="Pfam" id="PF01467">
    <property type="entry name" value="CTP_transf_like"/>
    <property type="match status" value="1"/>
</dbReference>
<dbReference type="SUPFAM" id="SSF52374">
    <property type="entry name" value="Nucleotidylyl transferase"/>
    <property type="match status" value="1"/>
</dbReference>